<comment type="function">
    <text evidence="1">Catalyzes the decarboxylation of S-adenosylmethionine to S-adenosylmethioninamine (dcAdoMet), the propylamine donor required for the synthesis of the polyamines spermine and spermidine from the diamine putrescine.</text>
</comment>
<comment type="catalytic activity">
    <reaction evidence="1">
        <text>S-adenosyl-L-methionine + H(+) = S-adenosyl 3-(methylsulfanyl)propylamine + CO2</text>
        <dbReference type="Rhea" id="RHEA:15981"/>
        <dbReference type="ChEBI" id="CHEBI:15378"/>
        <dbReference type="ChEBI" id="CHEBI:16526"/>
        <dbReference type="ChEBI" id="CHEBI:57443"/>
        <dbReference type="ChEBI" id="CHEBI:59789"/>
        <dbReference type="EC" id="4.1.1.50"/>
    </reaction>
</comment>
<comment type="cofactor">
    <cofactor evidence="1">
        <name>pyruvate</name>
        <dbReference type="ChEBI" id="CHEBI:15361"/>
    </cofactor>
    <text evidence="1">Binds 1 pyruvoyl group covalently per subunit.</text>
</comment>
<comment type="pathway">
    <text evidence="1">Amine and polyamine biosynthesis; S-adenosylmethioninamine biosynthesis; S-adenosylmethioninamine from S-adenosyl-L-methionine: step 1/1.</text>
</comment>
<comment type="subunit">
    <text evidence="1">Heterooctamer of four alpha and four beta chains arranged as a tetramer of alpha/beta heterodimers.</text>
</comment>
<comment type="PTM">
    <text evidence="1">Is synthesized initially as an inactive proenzyme. Formation of the active enzyme involves a self-maturation process in which the active site pyruvoyl group is generated from an internal serine residue via an autocatalytic post-translational modification. Two non-identical subunits are generated from the proenzyme in this reaction, and the pyruvate is formed at the N-terminus of the alpha chain, which is derived from the carboxyl end of the proenzyme. The post-translation cleavage follows an unusual pathway, termed non-hydrolytic serinolysis, in which the side chain hydroxyl group of the serine supplies its oxygen atom to form the C-terminus of the beta chain, while the remainder of the serine residue undergoes an oxidative deamination to produce ammonia and the pyruvoyl group blocking the N-terminus of the alpha chain.</text>
</comment>
<comment type="similarity">
    <text evidence="1">Belongs to the prokaryotic AdoMetDC family. Type 2 subfamily.</text>
</comment>
<reference key="1">
    <citation type="journal article" date="2006" name="J. Bacteriol.">
        <title>Complete genome sequence of Yersinia pestis strains Antiqua and Nepal516: evidence of gene reduction in an emerging pathogen.</title>
        <authorList>
            <person name="Chain P.S.G."/>
            <person name="Hu P."/>
            <person name="Malfatti S.A."/>
            <person name="Radnedge L."/>
            <person name="Larimer F."/>
            <person name="Vergez L.M."/>
            <person name="Worsham P."/>
            <person name="Chu M.C."/>
            <person name="Andersen G.L."/>
        </authorList>
    </citation>
    <scope>NUCLEOTIDE SEQUENCE [LARGE SCALE GENOMIC DNA]</scope>
    <source>
        <strain>Antiqua</strain>
    </source>
</reference>
<proteinExistence type="inferred from homology"/>
<dbReference type="EC" id="4.1.1.50" evidence="1"/>
<dbReference type="EMBL" id="CP000308">
    <property type="protein sequence ID" value="ABG14876.1"/>
    <property type="molecule type" value="Genomic_DNA"/>
</dbReference>
<dbReference type="RefSeq" id="WP_002209337.1">
    <property type="nucleotide sequence ID" value="NZ_CP009906.1"/>
</dbReference>
<dbReference type="SMR" id="Q1C3U6"/>
<dbReference type="GeneID" id="57975297"/>
<dbReference type="KEGG" id="ypa:YPA_2914"/>
<dbReference type="UniPathway" id="UPA00331">
    <property type="reaction ID" value="UER00451"/>
</dbReference>
<dbReference type="Proteomes" id="UP000001971">
    <property type="component" value="Chromosome"/>
</dbReference>
<dbReference type="GO" id="GO:0005829">
    <property type="term" value="C:cytosol"/>
    <property type="evidence" value="ECO:0007669"/>
    <property type="project" value="TreeGrafter"/>
</dbReference>
<dbReference type="GO" id="GO:0004014">
    <property type="term" value="F:adenosylmethionine decarboxylase activity"/>
    <property type="evidence" value="ECO:0007669"/>
    <property type="project" value="UniProtKB-UniRule"/>
</dbReference>
<dbReference type="GO" id="GO:0008295">
    <property type="term" value="P:spermidine biosynthetic process"/>
    <property type="evidence" value="ECO:0007669"/>
    <property type="project" value="UniProtKB-UniRule"/>
</dbReference>
<dbReference type="FunFam" id="3.60.90.10:FF:000001">
    <property type="entry name" value="S-adenosylmethionine decarboxylase proenzyme"/>
    <property type="match status" value="1"/>
</dbReference>
<dbReference type="Gene3D" id="3.60.90.10">
    <property type="entry name" value="S-adenosylmethionine decarboxylase"/>
    <property type="match status" value="1"/>
</dbReference>
<dbReference type="HAMAP" id="MF_00465">
    <property type="entry name" value="AdoMetDC_2"/>
    <property type="match status" value="1"/>
</dbReference>
<dbReference type="InterPro" id="IPR003826">
    <property type="entry name" value="AdoMetDC_fam_prok"/>
</dbReference>
<dbReference type="InterPro" id="IPR009165">
    <property type="entry name" value="S-AdoMet_deCO2ase_bac"/>
</dbReference>
<dbReference type="InterPro" id="IPR016067">
    <property type="entry name" value="S-AdoMet_deCO2ase_core"/>
</dbReference>
<dbReference type="NCBIfam" id="TIGR03331">
    <property type="entry name" value="SAM_DCase_Eco"/>
    <property type="match status" value="1"/>
</dbReference>
<dbReference type="PANTHER" id="PTHR33866">
    <property type="entry name" value="S-ADENOSYLMETHIONINE DECARBOXYLASE PROENZYME"/>
    <property type="match status" value="1"/>
</dbReference>
<dbReference type="PANTHER" id="PTHR33866:SF1">
    <property type="entry name" value="S-ADENOSYLMETHIONINE DECARBOXYLASE PROENZYME"/>
    <property type="match status" value="1"/>
</dbReference>
<dbReference type="Pfam" id="PF02675">
    <property type="entry name" value="AdoMet_dc"/>
    <property type="match status" value="1"/>
</dbReference>
<dbReference type="PIRSF" id="PIRSF001356">
    <property type="entry name" value="SAM_decarboxylas"/>
    <property type="match status" value="1"/>
</dbReference>
<dbReference type="SUPFAM" id="SSF56276">
    <property type="entry name" value="S-adenosylmethionine decarboxylase"/>
    <property type="match status" value="1"/>
</dbReference>
<gene>
    <name evidence="1" type="primary">speD</name>
    <name type="ordered locus">YPA_2914</name>
</gene>
<evidence type="ECO:0000255" key="1">
    <source>
        <dbReference type="HAMAP-Rule" id="MF_00465"/>
    </source>
</evidence>
<accession>Q1C3U6</accession>
<organism>
    <name type="scientific">Yersinia pestis bv. Antiqua (strain Antiqua)</name>
    <dbReference type="NCBI Taxonomy" id="360102"/>
    <lineage>
        <taxon>Bacteria</taxon>
        <taxon>Pseudomonadati</taxon>
        <taxon>Pseudomonadota</taxon>
        <taxon>Gammaproteobacteria</taxon>
        <taxon>Enterobacterales</taxon>
        <taxon>Yersiniaceae</taxon>
        <taxon>Yersinia</taxon>
    </lineage>
</organism>
<name>SPED_YERPA</name>
<feature type="chain" id="PRO_0000273623" description="S-adenosylmethionine decarboxylase beta chain" evidence="1">
    <location>
        <begin position="1"/>
        <end position="111"/>
    </location>
</feature>
<feature type="chain" id="PRO_0000273624" description="S-adenosylmethionine decarboxylase alpha chain" evidence="1">
    <location>
        <begin position="112"/>
        <end position="264"/>
    </location>
</feature>
<feature type="active site" description="Schiff-base intermediate with substrate; via pyruvic acid" evidence="1">
    <location>
        <position position="112"/>
    </location>
</feature>
<feature type="active site" description="Proton acceptor; for processing activity" evidence="1">
    <location>
        <position position="117"/>
    </location>
</feature>
<feature type="active site" description="Proton donor; for catalytic activity" evidence="1">
    <location>
        <position position="140"/>
    </location>
</feature>
<feature type="site" description="Cleavage (non-hydrolytic); by autolysis" evidence="1">
    <location>
        <begin position="111"/>
        <end position="112"/>
    </location>
</feature>
<feature type="modified residue" description="Pyruvic acid (Ser); by autocatalysis" evidence="1">
    <location>
        <position position="112"/>
    </location>
</feature>
<keyword id="KW-0068">Autocatalytic cleavage</keyword>
<keyword id="KW-0210">Decarboxylase</keyword>
<keyword id="KW-0456">Lyase</keyword>
<keyword id="KW-0620">Polyamine biosynthesis</keyword>
<keyword id="KW-0670">Pyruvate</keyword>
<keyword id="KW-0949">S-adenosyl-L-methionine</keyword>
<keyword id="KW-0704">Schiff base</keyword>
<keyword id="KW-0745">Spermidine biosynthesis</keyword>
<keyword id="KW-0865">Zymogen</keyword>
<protein>
    <recommendedName>
        <fullName evidence="1">S-adenosylmethionine decarboxylase proenzyme</fullName>
        <shortName evidence="1">AdoMetDC</shortName>
        <shortName evidence="1">SAMDC</shortName>
        <ecNumber evidence="1">4.1.1.50</ecNumber>
    </recommendedName>
    <component>
        <recommendedName>
            <fullName evidence="1">S-adenosylmethionine decarboxylase beta chain</fullName>
        </recommendedName>
    </component>
    <component>
        <recommendedName>
            <fullName evidence="1">S-adenosylmethionine decarboxylase alpha chain</fullName>
        </recommendedName>
    </component>
</protein>
<sequence length="264" mass="30293">MSKLKLHGFNNLTKSLSFCIYDICYAKTADDRDGYIAYIDEQYNANRLTEILSETCSIIGANILNIARQDYDPQGASVTILVSEEPVDPRDVDTSEHPGPLPSAVVAHLDKSHICVHTYPESHPEAGLCTFRADIEVSTCGVISPLKALNYLIHQLESDIVTMDYRVRGFTRDINGVKHFIDHKINSIQNFMSDDMKSLYHMMDVNVYQENIFHTKMMLKDFDLKHYLFNAKPEELSAEEKEQITRLLYKEMQEIYYGRNVPEV</sequence>